<name>BHMT2_MOUSE</name>
<gene>
    <name type="primary">Bhmt2</name>
</gene>
<accession>Q91WS4</accession>
<accession>B1B1C9</accession>
<accession>Q8C1U2</accession>
<accession>Q9EQE8</accession>
<evidence type="ECO:0000250" key="1"/>
<evidence type="ECO:0000255" key="2">
    <source>
        <dbReference type="PROSITE-ProRule" id="PRU00333"/>
    </source>
</evidence>
<evidence type="ECO:0000269" key="3">
    <source>
    </source>
</evidence>
<evidence type="ECO:0000269" key="4">
    <source>
    </source>
</evidence>
<evidence type="ECO:0000305" key="5"/>
<evidence type="ECO:0007744" key="6">
    <source>
    </source>
</evidence>
<sequence>MAPAGSTRAKKGILERLDSGEVVVGDSGFLFTLEKRGFVKAGLWTPEAVVEHPSAVRQLHTEFLRAGADVLQTFTFSATEDNMASKWEAVNAAACDLAQEVAGGGGALVAGGICQTSLYKYHKDETRIKNIFRLQLEVFARKNVDFLIAEYFEHVEEAVWAVEVLREVGAPVAVTMCIGPEGDMHDVTPGECAVKLARAGADIIGVNCRFGPWTSLQTMKLMKEGLRDASLQAHLMVQCLGFHTPDCGKGGFVDLPEYPFGLEPRVATRWDIQKYAREAYNLGIRYIGGCCGFEPYHIRAIAEELAPERGFLPPASEKHGSWGSGLNMHTKPWIRARARREYWENLLPASGRPFCPSLSKPDA</sequence>
<dbReference type="EC" id="2.1.1.10"/>
<dbReference type="EMBL" id="AF257474">
    <property type="protein sequence ID" value="AAG41357.1"/>
    <property type="molecule type" value="mRNA"/>
</dbReference>
<dbReference type="EMBL" id="AK090308">
    <property type="protein sequence ID" value="BAC41163.1"/>
    <property type="molecule type" value="mRNA"/>
</dbReference>
<dbReference type="EMBL" id="AK145901">
    <property type="protein sequence ID" value="BAE26737.1"/>
    <property type="molecule type" value="mRNA"/>
</dbReference>
<dbReference type="EMBL" id="AC158524">
    <property type="status" value="NOT_ANNOTATED_CDS"/>
    <property type="molecule type" value="Genomic_DNA"/>
</dbReference>
<dbReference type="EMBL" id="CT030023">
    <property type="status" value="NOT_ANNOTATED_CDS"/>
    <property type="molecule type" value="Genomic_DNA"/>
</dbReference>
<dbReference type="EMBL" id="BC013515">
    <property type="protein sequence ID" value="AAH13515.1"/>
    <property type="molecule type" value="mRNA"/>
</dbReference>
<dbReference type="CCDS" id="CCDS26689.1"/>
<dbReference type="RefSeq" id="NP_075022.2">
    <property type="nucleotide sequence ID" value="NM_022884.2"/>
</dbReference>
<dbReference type="SMR" id="Q91WS4"/>
<dbReference type="FunCoup" id="Q91WS4">
    <property type="interactions" value="263"/>
</dbReference>
<dbReference type="STRING" id="10090.ENSMUSP00000015941"/>
<dbReference type="iPTMnet" id="Q91WS4"/>
<dbReference type="PhosphoSitePlus" id="Q91WS4"/>
<dbReference type="SwissPalm" id="Q91WS4"/>
<dbReference type="jPOST" id="Q91WS4"/>
<dbReference type="PaxDb" id="10090-ENSMUSP00000015941"/>
<dbReference type="PeptideAtlas" id="Q91WS4"/>
<dbReference type="ProteomicsDB" id="273683"/>
<dbReference type="Antibodypedia" id="24546">
    <property type="antibodies" value="116 antibodies from 21 providers"/>
</dbReference>
<dbReference type="DNASU" id="64918"/>
<dbReference type="Ensembl" id="ENSMUST00000015941.8">
    <property type="protein sequence ID" value="ENSMUSP00000015941.8"/>
    <property type="gene ID" value="ENSMUSG00000042118.8"/>
</dbReference>
<dbReference type="GeneID" id="64918"/>
<dbReference type="KEGG" id="mmu:64918"/>
<dbReference type="UCSC" id="uc007rlk.1">
    <property type="organism name" value="mouse"/>
</dbReference>
<dbReference type="AGR" id="MGI:1891379"/>
<dbReference type="CTD" id="23743"/>
<dbReference type="MGI" id="MGI:1891379">
    <property type="gene designation" value="Bhmt2"/>
</dbReference>
<dbReference type="VEuPathDB" id="HostDB:ENSMUSG00000042118"/>
<dbReference type="eggNOG" id="KOG1579">
    <property type="taxonomic scope" value="Eukaryota"/>
</dbReference>
<dbReference type="GeneTree" id="ENSGT00390000003122"/>
<dbReference type="HOGENOM" id="CLU_047457_0_0_1"/>
<dbReference type="InParanoid" id="Q91WS4"/>
<dbReference type="OMA" id="ENMESKW"/>
<dbReference type="OrthoDB" id="261426at2759"/>
<dbReference type="PhylomeDB" id="Q91WS4"/>
<dbReference type="TreeFam" id="TF329202"/>
<dbReference type="Reactome" id="R-MMU-1614635">
    <property type="pathway name" value="Sulfur amino acid metabolism"/>
</dbReference>
<dbReference type="UniPathway" id="UPA00051">
    <property type="reaction ID" value="UER00083"/>
</dbReference>
<dbReference type="BioGRID-ORCS" id="64918">
    <property type="hits" value="5 hits in 80 CRISPR screens"/>
</dbReference>
<dbReference type="PRO" id="PR:Q91WS4"/>
<dbReference type="Proteomes" id="UP000000589">
    <property type="component" value="Chromosome 13"/>
</dbReference>
<dbReference type="RNAct" id="Q91WS4">
    <property type="molecule type" value="protein"/>
</dbReference>
<dbReference type="Bgee" id="ENSMUSG00000042118">
    <property type="expression patterns" value="Expressed in left lobe of liver and 138 other cell types or tissues"/>
</dbReference>
<dbReference type="GO" id="GO:0008898">
    <property type="term" value="F:S-adenosylmethionine-homocysteine S-methyltransferase activity"/>
    <property type="evidence" value="ECO:0000266"/>
    <property type="project" value="MGI"/>
</dbReference>
<dbReference type="GO" id="GO:0061627">
    <property type="term" value="F:S-methylmethionine-homocysteine S-methyltransferase activity"/>
    <property type="evidence" value="ECO:0007669"/>
    <property type="project" value="Ensembl"/>
</dbReference>
<dbReference type="GO" id="GO:0008270">
    <property type="term" value="F:zinc ion binding"/>
    <property type="evidence" value="ECO:0007669"/>
    <property type="project" value="Ensembl"/>
</dbReference>
<dbReference type="GO" id="GO:0071267">
    <property type="term" value="P:L-methionine salvage"/>
    <property type="evidence" value="ECO:0007669"/>
    <property type="project" value="Ensembl"/>
</dbReference>
<dbReference type="GO" id="GO:0009086">
    <property type="term" value="P:methionine biosynthetic process"/>
    <property type="evidence" value="ECO:0000266"/>
    <property type="project" value="MGI"/>
</dbReference>
<dbReference type="GO" id="GO:0032259">
    <property type="term" value="P:methylation"/>
    <property type="evidence" value="ECO:0007669"/>
    <property type="project" value="UniProtKB-KW"/>
</dbReference>
<dbReference type="GO" id="GO:0046500">
    <property type="term" value="P:S-adenosylmethionine metabolic process"/>
    <property type="evidence" value="ECO:0007669"/>
    <property type="project" value="Ensembl"/>
</dbReference>
<dbReference type="GO" id="GO:0033477">
    <property type="term" value="P:S-methylmethionine metabolic process"/>
    <property type="evidence" value="ECO:0007669"/>
    <property type="project" value="Ensembl"/>
</dbReference>
<dbReference type="FunFam" id="3.20.20.330:FF:000003">
    <property type="entry name" value="Betaine--homocysteine S-methyltransferase 1"/>
    <property type="match status" value="1"/>
</dbReference>
<dbReference type="Gene3D" id="3.20.20.330">
    <property type="entry name" value="Homocysteine-binding-like domain"/>
    <property type="match status" value="1"/>
</dbReference>
<dbReference type="InterPro" id="IPR017226">
    <property type="entry name" value="Betaine-hCys_S-MeTrfase_BHMT"/>
</dbReference>
<dbReference type="InterPro" id="IPR051524">
    <property type="entry name" value="BHMT"/>
</dbReference>
<dbReference type="InterPro" id="IPR003726">
    <property type="entry name" value="HCY_dom"/>
</dbReference>
<dbReference type="InterPro" id="IPR036589">
    <property type="entry name" value="HCY_dom_sf"/>
</dbReference>
<dbReference type="PANTHER" id="PTHR46120">
    <property type="entry name" value="BETAINE--HOMOCYSTEINE S-METHYLTRANSFERASE 1"/>
    <property type="match status" value="1"/>
</dbReference>
<dbReference type="PANTHER" id="PTHR46120:SF3">
    <property type="entry name" value="S-METHYLMETHIONINE--HOMOCYSTEINE S-METHYLTRANSFERASE BHMT2"/>
    <property type="match status" value="1"/>
</dbReference>
<dbReference type="Pfam" id="PF02574">
    <property type="entry name" value="S-methyl_trans"/>
    <property type="match status" value="1"/>
</dbReference>
<dbReference type="PIRSF" id="PIRSF037505">
    <property type="entry name" value="Betaine_HMT"/>
    <property type="match status" value="1"/>
</dbReference>
<dbReference type="SUPFAM" id="SSF82282">
    <property type="entry name" value="Homocysteine S-methyltransferase"/>
    <property type="match status" value="1"/>
</dbReference>
<dbReference type="PROSITE" id="PS50970">
    <property type="entry name" value="HCY"/>
    <property type="match status" value="1"/>
</dbReference>
<organism>
    <name type="scientific">Mus musculus</name>
    <name type="common">Mouse</name>
    <dbReference type="NCBI Taxonomy" id="10090"/>
    <lineage>
        <taxon>Eukaryota</taxon>
        <taxon>Metazoa</taxon>
        <taxon>Chordata</taxon>
        <taxon>Craniata</taxon>
        <taxon>Vertebrata</taxon>
        <taxon>Euteleostomi</taxon>
        <taxon>Mammalia</taxon>
        <taxon>Eutheria</taxon>
        <taxon>Euarchontoglires</taxon>
        <taxon>Glires</taxon>
        <taxon>Rodentia</taxon>
        <taxon>Myomorpha</taxon>
        <taxon>Muroidea</taxon>
        <taxon>Muridae</taxon>
        <taxon>Murinae</taxon>
        <taxon>Mus</taxon>
        <taxon>Mus</taxon>
    </lineage>
</organism>
<proteinExistence type="evidence at protein level"/>
<protein>
    <recommendedName>
        <fullName>S-methylmethionine--homocysteine S-methyltransferase BHMT2</fullName>
        <shortName>SMM-hcy methyltransferase</shortName>
        <ecNumber>2.1.1.10</ecNumber>
    </recommendedName>
    <alternativeName>
        <fullName>Betaine--homocysteine S-methyltransferase 2</fullName>
    </alternativeName>
</protein>
<reference key="1">
    <citation type="journal article" date="2000" name="Genomics">
        <title>Betaine-homocysteine methyltransferase-2: cDNA cloning, gene sequence, physical mapping, and expression of the human and mouse genes.</title>
        <authorList>
            <person name="Chadwick L.H."/>
            <person name="McCandless S.E."/>
            <person name="Silverman G.L."/>
            <person name="Schwartz S."/>
            <person name="Westaway D."/>
            <person name="Nadeau J.H."/>
        </authorList>
    </citation>
    <scope>NUCLEOTIDE SEQUENCE [MRNA]</scope>
    <scope>TISSUE SPECIFICITY</scope>
</reference>
<reference key="2">
    <citation type="journal article" date="2005" name="Science">
        <title>The transcriptional landscape of the mammalian genome.</title>
        <authorList>
            <person name="Carninci P."/>
            <person name="Kasukawa T."/>
            <person name="Katayama S."/>
            <person name="Gough J."/>
            <person name="Frith M.C."/>
            <person name="Maeda N."/>
            <person name="Oyama R."/>
            <person name="Ravasi T."/>
            <person name="Lenhard B."/>
            <person name="Wells C."/>
            <person name="Kodzius R."/>
            <person name="Shimokawa K."/>
            <person name="Bajic V.B."/>
            <person name="Brenner S.E."/>
            <person name="Batalov S."/>
            <person name="Forrest A.R."/>
            <person name="Zavolan M."/>
            <person name="Davis M.J."/>
            <person name="Wilming L.G."/>
            <person name="Aidinis V."/>
            <person name="Allen J.E."/>
            <person name="Ambesi-Impiombato A."/>
            <person name="Apweiler R."/>
            <person name="Aturaliya R.N."/>
            <person name="Bailey T.L."/>
            <person name="Bansal M."/>
            <person name="Baxter L."/>
            <person name="Beisel K.W."/>
            <person name="Bersano T."/>
            <person name="Bono H."/>
            <person name="Chalk A.M."/>
            <person name="Chiu K.P."/>
            <person name="Choudhary V."/>
            <person name="Christoffels A."/>
            <person name="Clutterbuck D.R."/>
            <person name="Crowe M.L."/>
            <person name="Dalla E."/>
            <person name="Dalrymple B.P."/>
            <person name="de Bono B."/>
            <person name="Della Gatta G."/>
            <person name="di Bernardo D."/>
            <person name="Down T."/>
            <person name="Engstrom P."/>
            <person name="Fagiolini M."/>
            <person name="Faulkner G."/>
            <person name="Fletcher C.F."/>
            <person name="Fukushima T."/>
            <person name="Furuno M."/>
            <person name="Futaki S."/>
            <person name="Gariboldi M."/>
            <person name="Georgii-Hemming P."/>
            <person name="Gingeras T.R."/>
            <person name="Gojobori T."/>
            <person name="Green R.E."/>
            <person name="Gustincich S."/>
            <person name="Harbers M."/>
            <person name="Hayashi Y."/>
            <person name="Hensch T.K."/>
            <person name="Hirokawa N."/>
            <person name="Hill D."/>
            <person name="Huminiecki L."/>
            <person name="Iacono M."/>
            <person name="Ikeo K."/>
            <person name="Iwama A."/>
            <person name="Ishikawa T."/>
            <person name="Jakt M."/>
            <person name="Kanapin A."/>
            <person name="Katoh M."/>
            <person name="Kawasawa Y."/>
            <person name="Kelso J."/>
            <person name="Kitamura H."/>
            <person name="Kitano H."/>
            <person name="Kollias G."/>
            <person name="Krishnan S.P."/>
            <person name="Kruger A."/>
            <person name="Kummerfeld S.K."/>
            <person name="Kurochkin I.V."/>
            <person name="Lareau L.F."/>
            <person name="Lazarevic D."/>
            <person name="Lipovich L."/>
            <person name="Liu J."/>
            <person name="Liuni S."/>
            <person name="McWilliam S."/>
            <person name="Madan Babu M."/>
            <person name="Madera M."/>
            <person name="Marchionni L."/>
            <person name="Matsuda H."/>
            <person name="Matsuzawa S."/>
            <person name="Miki H."/>
            <person name="Mignone F."/>
            <person name="Miyake S."/>
            <person name="Morris K."/>
            <person name="Mottagui-Tabar S."/>
            <person name="Mulder N."/>
            <person name="Nakano N."/>
            <person name="Nakauchi H."/>
            <person name="Ng P."/>
            <person name="Nilsson R."/>
            <person name="Nishiguchi S."/>
            <person name="Nishikawa S."/>
            <person name="Nori F."/>
            <person name="Ohara O."/>
            <person name="Okazaki Y."/>
            <person name="Orlando V."/>
            <person name="Pang K.C."/>
            <person name="Pavan W.J."/>
            <person name="Pavesi G."/>
            <person name="Pesole G."/>
            <person name="Petrovsky N."/>
            <person name="Piazza S."/>
            <person name="Reed J."/>
            <person name="Reid J.F."/>
            <person name="Ring B.Z."/>
            <person name="Ringwald M."/>
            <person name="Rost B."/>
            <person name="Ruan Y."/>
            <person name="Salzberg S.L."/>
            <person name="Sandelin A."/>
            <person name="Schneider C."/>
            <person name="Schoenbach C."/>
            <person name="Sekiguchi K."/>
            <person name="Semple C.A."/>
            <person name="Seno S."/>
            <person name="Sessa L."/>
            <person name="Sheng Y."/>
            <person name="Shibata Y."/>
            <person name="Shimada H."/>
            <person name="Shimada K."/>
            <person name="Silva D."/>
            <person name="Sinclair B."/>
            <person name="Sperling S."/>
            <person name="Stupka E."/>
            <person name="Sugiura K."/>
            <person name="Sultana R."/>
            <person name="Takenaka Y."/>
            <person name="Taki K."/>
            <person name="Tammoja K."/>
            <person name="Tan S.L."/>
            <person name="Tang S."/>
            <person name="Taylor M.S."/>
            <person name="Tegner J."/>
            <person name="Teichmann S.A."/>
            <person name="Ueda H.R."/>
            <person name="van Nimwegen E."/>
            <person name="Verardo R."/>
            <person name="Wei C.L."/>
            <person name="Yagi K."/>
            <person name="Yamanishi H."/>
            <person name="Zabarovsky E."/>
            <person name="Zhu S."/>
            <person name="Zimmer A."/>
            <person name="Hide W."/>
            <person name="Bult C."/>
            <person name="Grimmond S.M."/>
            <person name="Teasdale R.D."/>
            <person name="Liu E.T."/>
            <person name="Brusic V."/>
            <person name="Quackenbush J."/>
            <person name="Wahlestedt C."/>
            <person name="Mattick J.S."/>
            <person name="Hume D.A."/>
            <person name="Kai C."/>
            <person name="Sasaki D."/>
            <person name="Tomaru Y."/>
            <person name="Fukuda S."/>
            <person name="Kanamori-Katayama M."/>
            <person name="Suzuki M."/>
            <person name="Aoki J."/>
            <person name="Arakawa T."/>
            <person name="Iida J."/>
            <person name="Imamura K."/>
            <person name="Itoh M."/>
            <person name="Kato T."/>
            <person name="Kawaji H."/>
            <person name="Kawagashira N."/>
            <person name="Kawashima T."/>
            <person name="Kojima M."/>
            <person name="Kondo S."/>
            <person name="Konno H."/>
            <person name="Nakano K."/>
            <person name="Ninomiya N."/>
            <person name="Nishio T."/>
            <person name="Okada M."/>
            <person name="Plessy C."/>
            <person name="Shibata K."/>
            <person name="Shiraki T."/>
            <person name="Suzuki S."/>
            <person name="Tagami M."/>
            <person name="Waki K."/>
            <person name="Watahiki A."/>
            <person name="Okamura-Oho Y."/>
            <person name="Suzuki H."/>
            <person name="Kawai J."/>
            <person name="Hayashizaki Y."/>
        </authorList>
    </citation>
    <scope>NUCLEOTIDE SEQUENCE [LARGE SCALE MRNA]</scope>
    <source>
        <strain>C57BL/6J</strain>
        <tissue>Gall bladder</tissue>
        <tissue>Liver</tissue>
    </source>
</reference>
<reference key="3">
    <citation type="journal article" date="2009" name="PLoS Biol.">
        <title>Lineage-specific biology revealed by a finished genome assembly of the mouse.</title>
        <authorList>
            <person name="Church D.M."/>
            <person name="Goodstadt L."/>
            <person name="Hillier L.W."/>
            <person name="Zody M.C."/>
            <person name="Goldstein S."/>
            <person name="She X."/>
            <person name="Bult C.J."/>
            <person name="Agarwala R."/>
            <person name="Cherry J.L."/>
            <person name="DiCuccio M."/>
            <person name="Hlavina W."/>
            <person name="Kapustin Y."/>
            <person name="Meric P."/>
            <person name="Maglott D."/>
            <person name="Birtle Z."/>
            <person name="Marques A.C."/>
            <person name="Graves T."/>
            <person name="Zhou S."/>
            <person name="Teague B."/>
            <person name="Potamousis K."/>
            <person name="Churas C."/>
            <person name="Place M."/>
            <person name="Herschleb J."/>
            <person name="Runnheim R."/>
            <person name="Forrest D."/>
            <person name="Amos-Landgraf J."/>
            <person name="Schwartz D.C."/>
            <person name="Cheng Z."/>
            <person name="Lindblad-Toh K."/>
            <person name="Eichler E.E."/>
            <person name="Ponting C.P."/>
        </authorList>
    </citation>
    <scope>NUCLEOTIDE SEQUENCE [LARGE SCALE GENOMIC DNA]</scope>
    <source>
        <strain>C57BL/6J</strain>
    </source>
</reference>
<reference key="4">
    <citation type="journal article" date="2004" name="Genome Res.">
        <title>The status, quality, and expansion of the NIH full-length cDNA project: the Mammalian Gene Collection (MGC).</title>
        <authorList>
            <consortium name="The MGC Project Team"/>
        </authorList>
    </citation>
    <scope>NUCLEOTIDE SEQUENCE [LARGE SCALE MRNA]</scope>
    <source>
        <strain>FVB/N</strain>
        <tissue>Kidney</tissue>
    </source>
</reference>
<reference key="5">
    <citation type="journal article" date="2007" name="Proc. Natl. Acad. Sci. U.S.A.">
        <title>Large-scale phosphorylation analysis of mouse liver.</title>
        <authorList>
            <person name="Villen J."/>
            <person name="Beausoleil S.A."/>
            <person name="Gerber S.A."/>
            <person name="Gygi S.P."/>
        </authorList>
    </citation>
    <scope>PHOSPHORYLATION [LARGE SCALE ANALYSIS] AT SER-321</scope>
    <scope>IDENTIFICATION BY MASS SPECTROMETRY [LARGE SCALE ANALYSIS]</scope>
    <source>
        <tissue>Liver</tissue>
    </source>
</reference>
<reference key="6">
    <citation type="journal article" date="2008" name="J. Biol. Chem.">
        <title>Betaine-homocysteine S-methyltransferase-2 is an S-methylmethionine-homocysteine methyltransferase.</title>
        <authorList>
            <person name="Szegedi S.S."/>
            <person name="Castro C.C."/>
            <person name="Koutmos M."/>
            <person name="Garrow T.A."/>
        </authorList>
    </citation>
    <scope>FUNCTION</scope>
    <scope>CATALYTIC ACTIVITY</scope>
</reference>
<reference key="7">
    <citation type="journal article" date="2010" name="Cell">
        <title>A tissue-specific atlas of mouse protein phosphorylation and expression.</title>
        <authorList>
            <person name="Huttlin E.L."/>
            <person name="Jedrychowski M.P."/>
            <person name="Elias J.E."/>
            <person name="Goswami T."/>
            <person name="Rad R."/>
            <person name="Beausoleil S.A."/>
            <person name="Villen J."/>
            <person name="Haas W."/>
            <person name="Sowa M.E."/>
            <person name="Gygi S.P."/>
        </authorList>
    </citation>
    <scope>IDENTIFICATION BY MASS SPECTROMETRY [LARGE SCALE ANALYSIS]</scope>
    <source>
        <tissue>Kidney</tissue>
        <tissue>Liver</tissue>
    </source>
</reference>
<comment type="function">
    <text evidence="4">Involved in the regulation of homocysteine metabolism. Converts homocysteine to methionine using S-methylmethionine (SMM) as a methyl donor.</text>
</comment>
<comment type="catalytic activity">
    <reaction evidence="4">
        <text>S-methyl-L-methionine + L-homocysteine = 2 L-methionine + H(+)</text>
        <dbReference type="Rhea" id="RHEA:26337"/>
        <dbReference type="ChEBI" id="CHEBI:15378"/>
        <dbReference type="ChEBI" id="CHEBI:57844"/>
        <dbReference type="ChEBI" id="CHEBI:58199"/>
        <dbReference type="ChEBI" id="CHEBI:58252"/>
        <dbReference type="EC" id="2.1.1.10"/>
    </reaction>
</comment>
<comment type="cofactor">
    <cofactor evidence="1">
        <name>Zn(2+)</name>
        <dbReference type="ChEBI" id="CHEBI:29105"/>
    </cofactor>
    <text evidence="1">Binds 1 zinc ion per subunit.</text>
</comment>
<comment type="pathway">
    <text>Amino-acid biosynthesis; L-methionine biosynthesis via de novo pathway; L-methionine from L-homocysteine (BhmT route): step 1/1.</text>
</comment>
<comment type="subunit">
    <text evidence="1">Homotetramer.</text>
</comment>
<comment type="tissue specificity">
    <text evidence="3">Expressed in fetal heart, lung, liver, kidney and eye.</text>
</comment>
<feature type="chain" id="PRO_0000273225" description="S-methylmethionine--homocysteine S-methyltransferase BHMT2">
    <location>
        <begin position="1"/>
        <end position="363"/>
    </location>
</feature>
<feature type="domain" description="Hcy-binding" evidence="2">
    <location>
        <begin position="11"/>
        <end position="305"/>
    </location>
</feature>
<feature type="binding site" evidence="2">
    <location>
        <position position="208"/>
    </location>
    <ligand>
        <name>Zn(2+)</name>
        <dbReference type="ChEBI" id="CHEBI:29105"/>
    </ligand>
</feature>
<feature type="binding site" evidence="2">
    <location>
        <position position="290"/>
    </location>
    <ligand>
        <name>Zn(2+)</name>
        <dbReference type="ChEBI" id="CHEBI:29105"/>
    </ligand>
</feature>
<feature type="binding site" evidence="2">
    <location>
        <position position="291"/>
    </location>
    <ligand>
        <name>Zn(2+)</name>
        <dbReference type="ChEBI" id="CHEBI:29105"/>
    </ligand>
</feature>
<feature type="modified residue" description="Phosphoserine" evidence="6">
    <location>
        <position position="321"/>
    </location>
</feature>
<feature type="sequence conflict" description="In Ref. 1; AAG41357." evidence="5" ref="1">
    <original>I</original>
    <variation>V</variation>
    <location>
        <position position="13"/>
    </location>
</feature>
<feature type="sequence conflict" description="In Ref. 4; AAH13515." evidence="5" ref="4">
    <original>S</original>
    <variation>G</variation>
    <location>
        <position position="27"/>
    </location>
</feature>
<feature type="sequence conflict" description="In Ref. 1; AAG41357." evidence="5" ref="1">
    <original>R</original>
    <variation>G</variation>
    <location>
        <position position="36"/>
    </location>
</feature>
<feature type="sequence conflict" description="In Ref. 1; AAG41357." evidence="5" ref="1">
    <original>N</original>
    <variation>S</variation>
    <location>
        <position position="327"/>
    </location>
</feature>
<keyword id="KW-0479">Metal-binding</keyword>
<keyword id="KW-0489">Methyltransferase</keyword>
<keyword id="KW-0597">Phosphoprotein</keyword>
<keyword id="KW-1185">Reference proteome</keyword>
<keyword id="KW-0808">Transferase</keyword>
<keyword id="KW-0862">Zinc</keyword>